<proteinExistence type="inferred from homology"/>
<organism>
    <name type="scientific">Saccharopolyspora erythraea (strain ATCC 11635 / DSM 40517 / JCM 4748 / NBRC 13426 / NCIMB 8594 / NRRL 2338)</name>
    <dbReference type="NCBI Taxonomy" id="405948"/>
    <lineage>
        <taxon>Bacteria</taxon>
        <taxon>Bacillati</taxon>
        <taxon>Actinomycetota</taxon>
        <taxon>Actinomycetes</taxon>
        <taxon>Pseudonocardiales</taxon>
        <taxon>Pseudonocardiaceae</taxon>
        <taxon>Saccharopolyspora</taxon>
    </lineage>
</organism>
<comment type="function">
    <text evidence="1">Catalyzes the oxidation of either pyridoxine 5'-phosphate (PNP) or pyridoxamine 5'-phosphate (PMP) into pyridoxal 5'-phosphate (PLP).</text>
</comment>
<comment type="catalytic activity">
    <reaction evidence="1">
        <text>pyridoxamine 5'-phosphate + O2 + H2O = pyridoxal 5'-phosphate + H2O2 + NH4(+)</text>
        <dbReference type="Rhea" id="RHEA:15817"/>
        <dbReference type="ChEBI" id="CHEBI:15377"/>
        <dbReference type="ChEBI" id="CHEBI:15379"/>
        <dbReference type="ChEBI" id="CHEBI:16240"/>
        <dbReference type="ChEBI" id="CHEBI:28938"/>
        <dbReference type="ChEBI" id="CHEBI:58451"/>
        <dbReference type="ChEBI" id="CHEBI:597326"/>
        <dbReference type="EC" id="1.4.3.5"/>
    </reaction>
</comment>
<comment type="catalytic activity">
    <reaction evidence="1">
        <text>pyridoxine 5'-phosphate + O2 = pyridoxal 5'-phosphate + H2O2</text>
        <dbReference type="Rhea" id="RHEA:15149"/>
        <dbReference type="ChEBI" id="CHEBI:15379"/>
        <dbReference type="ChEBI" id="CHEBI:16240"/>
        <dbReference type="ChEBI" id="CHEBI:58589"/>
        <dbReference type="ChEBI" id="CHEBI:597326"/>
        <dbReference type="EC" id="1.4.3.5"/>
    </reaction>
</comment>
<comment type="cofactor">
    <cofactor evidence="1">
        <name>FMN</name>
        <dbReference type="ChEBI" id="CHEBI:58210"/>
    </cofactor>
    <text evidence="1">Binds 1 FMN per subunit.</text>
</comment>
<comment type="pathway">
    <text evidence="1">Cofactor metabolism; pyridoxal 5'-phosphate salvage; pyridoxal 5'-phosphate from pyridoxamine 5'-phosphate: step 1/1.</text>
</comment>
<comment type="pathway">
    <text evidence="1">Cofactor metabolism; pyridoxal 5'-phosphate salvage; pyridoxal 5'-phosphate from pyridoxine 5'-phosphate: step 1/1.</text>
</comment>
<comment type="subunit">
    <text evidence="1">Homodimer.</text>
</comment>
<comment type="similarity">
    <text evidence="1">Belongs to the pyridoxamine 5'-phosphate oxidase family.</text>
</comment>
<accession>A4F7G2</accession>
<dbReference type="EC" id="1.4.3.5" evidence="1"/>
<dbReference type="EMBL" id="AM420293">
    <property type="protein sequence ID" value="CAL99986.1"/>
    <property type="molecule type" value="Genomic_DNA"/>
</dbReference>
<dbReference type="RefSeq" id="WP_009950035.1">
    <property type="nucleotide sequence ID" value="NC_009142.1"/>
</dbReference>
<dbReference type="SMR" id="A4F7G2"/>
<dbReference type="STRING" id="405948.SACE_0641"/>
<dbReference type="KEGG" id="sen:SACE_0641"/>
<dbReference type="eggNOG" id="COG0259">
    <property type="taxonomic scope" value="Bacteria"/>
</dbReference>
<dbReference type="HOGENOM" id="CLU_032263_2_2_11"/>
<dbReference type="OrthoDB" id="9780392at2"/>
<dbReference type="UniPathway" id="UPA01068">
    <property type="reaction ID" value="UER00304"/>
</dbReference>
<dbReference type="UniPathway" id="UPA01068">
    <property type="reaction ID" value="UER00305"/>
</dbReference>
<dbReference type="Proteomes" id="UP000006728">
    <property type="component" value="Chromosome"/>
</dbReference>
<dbReference type="GO" id="GO:0010181">
    <property type="term" value="F:FMN binding"/>
    <property type="evidence" value="ECO:0007669"/>
    <property type="project" value="UniProtKB-UniRule"/>
</dbReference>
<dbReference type="GO" id="GO:0004733">
    <property type="term" value="F:pyridoxamine phosphate oxidase activity"/>
    <property type="evidence" value="ECO:0007669"/>
    <property type="project" value="UniProtKB-UniRule"/>
</dbReference>
<dbReference type="GO" id="GO:0008615">
    <property type="term" value="P:pyridoxine biosynthetic process"/>
    <property type="evidence" value="ECO:0007669"/>
    <property type="project" value="UniProtKB-KW"/>
</dbReference>
<dbReference type="Gene3D" id="2.30.110.10">
    <property type="entry name" value="Electron Transport, Fmn-binding Protein, Chain A"/>
    <property type="match status" value="1"/>
</dbReference>
<dbReference type="HAMAP" id="MF_01629">
    <property type="entry name" value="PdxH"/>
    <property type="match status" value="1"/>
</dbReference>
<dbReference type="InterPro" id="IPR000659">
    <property type="entry name" value="Pyridox_Oxase"/>
</dbReference>
<dbReference type="InterPro" id="IPR019740">
    <property type="entry name" value="Pyridox_Oxase_CS"/>
</dbReference>
<dbReference type="InterPro" id="IPR011576">
    <property type="entry name" value="Pyridox_Oxase_N"/>
</dbReference>
<dbReference type="InterPro" id="IPR019576">
    <property type="entry name" value="Pyridoxamine_oxidase_dimer_C"/>
</dbReference>
<dbReference type="InterPro" id="IPR012349">
    <property type="entry name" value="Split_barrel_FMN-bd"/>
</dbReference>
<dbReference type="NCBIfam" id="TIGR00558">
    <property type="entry name" value="pdxH"/>
    <property type="match status" value="1"/>
</dbReference>
<dbReference type="NCBIfam" id="NF004231">
    <property type="entry name" value="PRK05679.1"/>
    <property type="match status" value="1"/>
</dbReference>
<dbReference type="PANTHER" id="PTHR10851:SF0">
    <property type="entry name" value="PYRIDOXINE-5'-PHOSPHATE OXIDASE"/>
    <property type="match status" value="1"/>
</dbReference>
<dbReference type="PANTHER" id="PTHR10851">
    <property type="entry name" value="PYRIDOXINE-5-PHOSPHATE OXIDASE"/>
    <property type="match status" value="1"/>
</dbReference>
<dbReference type="Pfam" id="PF10590">
    <property type="entry name" value="PNP_phzG_C"/>
    <property type="match status" value="1"/>
</dbReference>
<dbReference type="Pfam" id="PF01243">
    <property type="entry name" value="PNPOx_N"/>
    <property type="match status" value="1"/>
</dbReference>
<dbReference type="PIRSF" id="PIRSF000190">
    <property type="entry name" value="Pyd_amn-ph_oxd"/>
    <property type="match status" value="1"/>
</dbReference>
<dbReference type="SUPFAM" id="SSF50475">
    <property type="entry name" value="FMN-binding split barrel"/>
    <property type="match status" value="1"/>
</dbReference>
<dbReference type="PROSITE" id="PS01064">
    <property type="entry name" value="PYRIDOX_OXIDASE"/>
    <property type="match status" value="1"/>
</dbReference>
<sequence length="222" mass="24706">MSEANSTPTATLPSMRVSYEAGSLDEGSLAGTWHEQLALWFEQAVHDPSIHEANAMVLATADADGLPSSRTVLCKGFDARGVVFFTNYTSAKSHDLKVTRFAAATFPWLAMQRQVNVRGTVEKVSQEETAEYWAERPRGSQLGAWASPQSRVVSGRSALESTLNGIERRFADAEKVPVPPHWGGWRIVPESVEFWQGRPDRLHDRLRFRNNDGAWVVERLAP</sequence>
<keyword id="KW-0285">Flavoprotein</keyword>
<keyword id="KW-0288">FMN</keyword>
<keyword id="KW-0560">Oxidoreductase</keyword>
<keyword id="KW-0664">Pyridoxine biosynthesis</keyword>
<keyword id="KW-1185">Reference proteome</keyword>
<reference key="1">
    <citation type="journal article" date="2007" name="Nat. Biotechnol.">
        <title>Complete genome sequence of the erythromycin-producing bacterium Saccharopolyspora erythraea NRRL23338.</title>
        <authorList>
            <person name="Oliynyk M."/>
            <person name="Samborskyy M."/>
            <person name="Lester J.B."/>
            <person name="Mironenko T."/>
            <person name="Scott N."/>
            <person name="Dickens S."/>
            <person name="Haydock S.F."/>
            <person name="Leadlay P.F."/>
        </authorList>
    </citation>
    <scope>NUCLEOTIDE SEQUENCE [LARGE SCALE GENOMIC DNA]</scope>
    <source>
        <strain>ATCC 11635 / DSM 40517 / JCM 4748 / NBRC 13426 / NCIMB 8594 / NRRL 2338</strain>
    </source>
</reference>
<name>PDXH_SACEN</name>
<feature type="chain" id="PRO_0000292324" description="Pyridoxine/pyridoxamine 5'-phosphate oxidase">
    <location>
        <begin position="1"/>
        <end position="222"/>
    </location>
</feature>
<feature type="binding site" evidence="1">
    <location>
        <begin position="16"/>
        <end position="19"/>
    </location>
    <ligand>
        <name>substrate</name>
    </ligand>
</feature>
<feature type="binding site" evidence="1">
    <location>
        <begin position="70"/>
        <end position="75"/>
    </location>
    <ligand>
        <name>FMN</name>
        <dbReference type="ChEBI" id="CHEBI:58210"/>
    </ligand>
</feature>
<feature type="binding site" evidence="1">
    <location>
        <position position="75"/>
    </location>
    <ligand>
        <name>substrate</name>
    </ligand>
</feature>
<feature type="binding site" evidence="1">
    <location>
        <begin position="85"/>
        <end position="86"/>
    </location>
    <ligand>
        <name>FMN</name>
        <dbReference type="ChEBI" id="CHEBI:58210"/>
    </ligand>
</feature>
<feature type="binding site" evidence="1">
    <location>
        <position position="92"/>
    </location>
    <ligand>
        <name>FMN</name>
        <dbReference type="ChEBI" id="CHEBI:58210"/>
    </ligand>
</feature>
<feature type="binding site" evidence="1">
    <location>
        <position position="114"/>
    </location>
    <ligand>
        <name>FMN</name>
        <dbReference type="ChEBI" id="CHEBI:58210"/>
    </ligand>
</feature>
<feature type="binding site" evidence="1">
    <location>
        <position position="132"/>
    </location>
    <ligand>
        <name>substrate</name>
    </ligand>
</feature>
<feature type="binding site" evidence="1">
    <location>
        <position position="136"/>
    </location>
    <ligand>
        <name>substrate</name>
    </ligand>
</feature>
<feature type="binding site" evidence="1">
    <location>
        <position position="140"/>
    </location>
    <ligand>
        <name>substrate</name>
    </ligand>
</feature>
<feature type="binding site" evidence="1">
    <location>
        <begin position="149"/>
        <end position="150"/>
    </location>
    <ligand>
        <name>FMN</name>
        <dbReference type="ChEBI" id="CHEBI:58210"/>
    </ligand>
</feature>
<feature type="binding site" evidence="1">
    <location>
        <position position="195"/>
    </location>
    <ligand>
        <name>FMN</name>
        <dbReference type="ChEBI" id="CHEBI:58210"/>
    </ligand>
</feature>
<feature type="binding site" evidence="1">
    <location>
        <begin position="201"/>
        <end position="203"/>
    </location>
    <ligand>
        <name>substrate</name>
    </ligand>
</feature>
<feature type="binding site" evidence="1">
    <location>
        <position position="205"/>
    </location>
    <ligand>
        <name>FMN</name>
        <dbReference type="ChEBI" id="CHEBI:58210"/>
    </ligand>
</feature>
<protein>
    <recommendedName>
        <fullName evidence="1">Pyridoxine/pyridoxamine 5'-phosphate oxidase</fullName>
        <ecNumber evidence="1">1.4.3.5</ecNumber>
    </recommendedName>
    <alternativeName>
        <fullName evidence="1">PNP/PMP oxidase</fullName>
        <shortName evidence="1">PNPOx</shortName>
    </alternativeName>
    <alternativeName>
        <fullName evidence="1">Pyridoxal 5'-phosphate synthase</fullName>
    </alternativeName>
</protein>
<gene>
    <name evidence="1" type="primary">pdxH</name>
    <name type="ordered locus">SACE_0641</name>
</gene>
<evidence type="ECO:0000255" key="1">
    <source>
        <dbReference type="HAMAP-Rule" id="MF_01629"/>
    </source>
</evidence>